<protein>
    <recommendedName>
        <fullName evidence="1">ATP phosphoribosyltransferase</fullName>
        <shortName evidence="1">ATP-PRT</shortName>
        <shortName evidence="1">ATP-PRTase</shortName>
        <ecNumber evidence="1">2.4.2.17</ecNumber>
    </recommendedName>
</protein>
<feature type="chain" id="PRO_0000229317" description="ATP phosphoribosyltransferase">
    <location>
        <begin position="1"/>
        <end position="241"/>
    </location>
</feature>
<comment type="function">
    <text evidence="1">Catalyzes the condensation of ATP and 5-phosphoribose 1-diphosphate to form N'-(5'-phosphoribosyl)-ATP (PR-ATP). Has a crucial role in the pathway because the rate of histidine biosynthesis seems to be controlled primarily by regulation of HisG enzymatic activity.</text>
</comment>
<comment type="catalytic activity">
    <reaction evidence="1">
        <text>1-(5-phospho-beta-D-ribosyl)-ATP + diphosphate = 5-phospho-alpha-D-ribose 1-diphosphate + ATP</text>
        <dbReference type="Rhea" id="RHEA:18473"/>
        <dbReference type="ChEBI" id="CHEBI:30616"/>
        <dbReference type="ChEBI" id="CHEBI:33019"/>
        <dbReference type="ChEBI" id="CHEBI:58017"/>
        <dbReference type="ChEBI" id="CHEBI:73183"/>
        <dbReference type="EC" id="2.4.2.17"/>
    </reaction>
</comment>
<comment type="pathway">
    <text evidence="1">Amino-acid biosynthesis; L-histidine biosynthesis; L-histidine from 5-phospho-alpha-D-ribose 1-diphosphate: step 1/9.</text>
</comment>
<comment type="subunit">
    <text evidence="1">Heteromultimer composed of HisG and HisZ subunits.</text>
</comment>
<comment type="subcellular location">
    <subcellularLocation>
        <location evidence="1">Cytoplasm</location>
    </subcellularLocation>
</comment>
<comment type="domain">
    <text>Lacks the C-terminal regulatory region which is replaced by HisZ.</text>
</comment>
<comment type="similarity">
    <text evidence="1">Belongs to the ATP phosphoribosyltransferase family. Short subfamily.</text>
</comment>
<gene>
    <name evidence="1" type="primary">hisG</name>
    <name type="ordered locus">GOX0990</name>
</gene>
<evidence type="ECO:0000255" key="1">
    <source>
        <dbReference type="HAMAP-Rule" id="MF_01018"/>
    </source>
</evidence>
<name>HIS1_GLUOX</name>
<organism>
    <name type="scientific">Gluconobacter oxydans (strain 621H)</name>
    <name type="common">Gluconobacter suboxydans</name>
    <dbReference type="NCBI Taxonomy" id="290633"/>
    <lineage>
        <taxon>Bacteria</taxon>
        <taxon>Pseudomonadati</taxon>
        <taxon>Pseudomonadota</taxon>
        <taxon>Alphaproteobacteria</taxon>
        <taxon>Acetobacterales</taxon>
        <taxon>Acetobacteraceae</taxon>
        <taxon>Gluconobacter</taxon>
    </lineage>
</organism>
<dbReference type="EC" id="2.4.2.17" evidence="1"/>
<dbReference type="EMBL" id="CP000009">
    <property type="protein sequence ID" value="AAW60762.1"/>
    <property type="molecule type" value="Genomic_DNA"/>
</dbReference>
<dbReference type="RefSeq" id="WP_011252556.1">
    <property type="nucleotide sequence ID" value="NC_006677.1"/>
</dbReference>
<dbReference type="SMR" id="Q5FS84"/>
<dbReference type="STRING" id="290633.GOX0990"/>
<dbReference type="KEGG" id="gox:GOX0990"/>
<dbReference type="eggNOG" id="COG0040">
    <property type="taxonomic scope" value="Bacteria"/>
</dbReference>
<dbReference type="HOGENOM" id="CLU_038115_2_0_5"/>
<dbReference type="UniPathway" id="UPA00031">
    <property type="reaction ID" value="UER00006"/>
</dbReference>
<dbReference type="Proteomes" id="UP000006375">
    <property type="component" value="Chromosome"/>
</dbReference>
<dbReference type="GO" id="GO:0005737">
    <property type="term" value="C:cytoplasm"/>
    <property type="evidence" value="ECO:0007669"/>
    <property type="project" value="UniProtKB-SubCell"/>
</dbReference>
<dbReference type="GO" id="GO:0005524">
    <property type="term" value="F:ATP binding"/>
    <property type="evidence" value="ECO:0007669"/>
    <property type="project" value="UniProtKB-KW"/>
</dbReference>
<dbReference type="GO" id="GO:0003879">
    <property type="term" value="F:ATP phosphoribosyltransferase activity"/>
    <property type="evidence" value="ECO:0007669"/>
    <property type="project" value="UniProtKB-UniRule"/>
</dbReference>
<dbReference type="GO" id="GO:0000105">
    <property type="term" value="P:L-histidine biosynthetic process"/>
    <property type="evidence" value="ECO:0007669"/>
    <property type="project" value="UniProtKB-UniRule"/>
</dbReference>
<dbReference type="CDD" id="cd13595">
    <property type="entry name" value="PBP2_HisGs"/>
    <property type="match status" value="1"/>
</dbReference>
<dbReference type="FunFam" id="3.40.190.10:FF:000008">
    <property type="entry name" value="ATP phosphoribosyltransferase"/>
    <property type="match status" value="1"/>
</dbReference>
<dbReference type="Gene3D" id="3.40.190.10">
    <property type="entry name" value="Periplasmic binding protein-like II"/>
    <property type="match status" value="2"/>
</dbReference>
<dbReference type="HAMAP" id="MF_01018">
    <property type="entry name" value="HisG_Short"/>
    <property type="match status" value="1"/>
</dbReference>
<dbReference type="InterPro" id="IPR013820">
    <property type="entry name" value="ATP_PRibTrfase_cat"/>
</dbReference>
<dbReference type="InterPro" id="IPR018198">
    <property type="entry name" value="ATP_PRibTrfase_CS"/>
</dbReference>
<dbReference type="InterPro" id="IPR001348">
    <property type="entry name" value="ATP_PRibTrfase_HisG"/>
</dbReference>
<dbReference type="InterPro" id="IPR024893">
    <property type="entry name" value="ATP_PRibTrfase_HisG_short"/>
</dbReference>
<dbReference type="NCBIfam" id="TIGR00070">
    <property type="entry name" value="hisG"/>
    <property type="match status" value="1"/>
</dbReference>
<dbReference type="PANTHER" id="PTHR21403:SF8">
    <property type="entry name" value="ATP PHOSPHORIBOSYLTRANSFERASE"/>
    <property type="match status" value="1"/>
</dbReference>
<dbReference type="PANTHER" id="PTHR21403">
    <property type="entry name" value="ATP PHOSPHORIBOSYLTRANSFERASE ATP-PRTASE"/>
    <property type="match status" value="1"/>
</dbReference>
<dbReference type="Pfam" id="PF01634">
    <property type="entry name" value="HisG"/>
    <property type="match status" value="1"/>
</dbReference>
<dbReference type="SUPFAM" id="SSF53850">
    <property type="entry name" value="Periplasmic binding protein-like II"/>
    <property type="match status" value="1"/>
</dbReference>
<dbReference type="PROSITE" id="PS01316">
    <property type="entry name" value="ATP_P_PHORIBOSYLTR"/>
    <property type="match status" value="1"/>
</dbReference>
<reference key="1">
    <citation type="journal article" date="2005" name="Nat. Biotechnol.">
        <title>Complete genome sequence of the acetic acid bacterium Gluconobacter oxydans.</title>
        <authorList>
            <person name="Prust C."/>
            <person name="Hoffmeister M."/>
            <person name="Liesegang H."/>
            <person name="Wiezer A."/>
            <person name="Fricke W.F."/>
            <person name="Ehrenreich A."/>
            <person name="Gottschalk G."/>
            <person name="Deppenmeier U."/>
        </authorList>
    </citation>
    <scope>NUCLEOTIDE SEQUENCE [LARGE SCALE GENOMIC DNA]</scope>
    <source>
        <strain>621H</strain>
    </source>
</reference>
<accession>Q5FS84</accession>
<keyword id="KW-0028">Amino-acid biosynthesis</keyword>
<keyword id="KW-0067">ATP-binding</keyword>
<keyword id="KW-0963">Cytoplasm</keyword>
<keyword id="KW-0328">Glycosyltransferase</keyword>
<keyword id="KW-0368">Histidine biosynthesis</keyword>
<keyword id="KW-0547">Nucleotide-binding</keyword>
<keyword id="KW-1185">Reference proteome</keyword>
<keyword id="KW-0808">Transferase</keyword>
<proteinExistence type="inferred from homology"/>
<sequence>MTAPQNGTGNGLQTGADLAVRSDSPLILALPKGRILKALAPVLTRTGIEPDPDCLTESSRRLRFGTSDPNLDVVRVRSFDVATFVAYGGADIGVCGADVLMEFDYPDIYAPLDLGIGGCRISVARPKTMVEDPATGQSRLCVATKYPTIARRHFASRAINAEIVHLNGAMELAPTLDLASVIVDLVDTGSTLRANGLMETETIAHVTSRLIVNRVALKTRPEEISALIERFRAALNTEEAA</sequence>